<protein>
    <recommendedName>
        <fullName evidence="1">Fructose-1,6-bisphosphatase class 1</fullName>
        <shortName evidence="1">FBPase class 1</shortName>
        <ecNumber evidence="1">3.1.3.11</ecNumber>
    </recommendedName>
    <alternativeName>
        <fullName evidence="1">D-fructose-1,6-bisphosphate 1-phosphohydrolase class 1</fullName>
    </alternativeName>
</protein>
<organism>
    <name type="scientific">Salmonella dublin (strain CT_02021853)</name>
    <dbReference type="NCBI Taxonomy" id="439851"/>
    <lineage>
        <taxon>Bacteria</taxon>
        <taxon>Pseudomonadati</taxon>
        <taxon>Pseudomonadota</taxon>
        <taxon>Gammaproteobacteria</taxon>
        <taxon>Enterobacterales</taxon>
        <taxon>Enterobacteriaceae</taxon>
        <taxon>Salmonella</taxon>
    </lineage>
</organism>
<feature type="chain" id="PRO_0000364687" description="Fructose-1,6-bisphosphatase class 1">
    <location>
        <begin position="1"/>
        <end position="332"/>
    </location>
</feature>
<feature type="binding site" evidence="1">
    <location>
        <position position="89"/>
    </location>
    <ligand>
        <name>Mg(2+)</name>
        <dbReference type="ChEBI" id="CHEBI:18420"/>
        <label>1</label>
    </ligand>
</feature>
<feature type="binding site" evidence="1">
    <location>
        <position position="110"/>
    </location>
    <ligand>
        <name>Mg(2+)</name>
        <dbReference type="ChEBI" id="CHEBI:18420"/>
        <label>1</label>
    </ligand>
</feature>
<feature type="binding site" evidence="1">
    <location>
        <position position="110"/>
    </location>
    <ligand>
        <name>Mg(2+)</name>
        <dbReference type="ChEBI" id="CHEBI:18420"/>
        <label>2</label>
    </ligand>
</feature>
<feature type="binding site" evidence="1">
    <location>
        <position position="112"/>
    </location>
    <ligand>
        <name>Mg(2+)</name>
        <dbReference type="ChEBI" id="CHEBI:18420"/>
        <label>1</label>
    </ligand>
</feature>
<feature type="binding site" evidence="1">
    <location>
        <begin position="113"/>
        <end position="116"/>
    </location>
    <ligand>
        <name>substrate</name>
    </ligand>
</feature>
<feature type="binding site" evidence="1">
    <location>
        <position position="113"/>
    </location>
    <ligand>
        <name>Mg(2+)</name>
        <dbReference type="ChEBI" id="CHEBI:18420"/>
        <label>2</label>
    </ligand>
</feature>
<feature type="binding site" evidence="1">
    <location>
        <position position="206"/>
    </location>
    <ligand>
        <name>substrate</name>
    </ligand>
</feature>
<feature type="binding site" evidence="1">
    <location>
        <position position="239"/>
    </location>
    <ligand>
        <name>substrate</name>
    </ligand>
</feature>
<feature type="binding site" evidence="1">
    <location>
        <begin position="257"/>
        <end position="259"/>
    </location>
    <ligand>
        <name>substrate</name>
    </ligand>
</feature>
<feature type="binding site" evidence="1">
    <location>
        <position position="269"/>
    </location>
    <ligand>
        <name>substrate</name>
    </ligand>
</feature>
<feature type="binding site" evidence="1">
    <location>
        <position position="275"/>
    </location>
    <ligand>
        <name>Mg(2+)</name>
        <dbReference type="ChEBI" id="CHEBI:18420"/>
        <label>2</label>
    </ligand>
</feature>
<accession>B5FSC7</accession>
<dbReference type="EC" id="3.1.3.11" evidence="1"/>
<dbReference type="EMBL" id="CP001144">
    <property type="protein sequence ID" value="ACH74968.1"/>
    <property type="molecule type" value="Genomic_DNA"/>
</dbReference>
<dbReference type="RefSeq" id="WP_000853764.1">
    <property type="nucleotide sequence ID" value="NC_011205.1"/>
</dbReference>
<dbReference type="SMR" id="B5FSC7"/>
<dbReference type="KEGG" id="sed:SeD_A4814"/>
<dbReference type="HOGENOM" id="CLU_039977_2_2_6"/>
<dbReference type="UniPathway" id="UPA00138"/>
<dbReference type="Proteomes" id="UP000008322">
    <property type="component" value="Chromosome"/>
</dbReference>
<dbReference type="GO" id="GO:0005829">
    <property type="term" value="C:cytosol"/>
    <property type="evidence" value="ECO:0007669"/>
    <property type="project" value="TreeGrafter"/>
</dbReference>
<dbReference type="GO" id="GO:0042132">
    <property type="term" value="F:fructose 1,6-bisphosphate 1-phosphatase activity"/>
    <property type="evidence" value="ECO:0007669"/>
    <property type="project" value="UniProtKB-UniRule"/>
</dbReference>
<dbReference type="GO" id="GO:0000287">
    <property type="term" value="F:magnesium ion binding"/>
    <property type="evidence" value="ECO:0007669"/>
    <property type="project" value="UniProtKB-UniRule"/>
</dbReference>
<dbReference type="GO" id="GO:0030388">
    <property type="term" value="P:fructose 1,6-bisphosphate metabolic process"/>
    <property type="evidence" value="ECO:0007669"/>
    <property type="project" value="TreeGrafter"/>
</dbReference>
<dbReference type="GO" id="GO:0006002">
    <property type="term" value="P:fructose 6-phosphate metabolic process"/>
    <property type="evidence" value="ECO:0007669"/>
    <property type="project" value="TreeGrafter"/>
</dbReference>
<dbReference type="GO" id="GO:0006000">
    <property type="term" value="P:fructose metabolic process"/>
    <property type="evidence" value="ECO:0007669"/>
    <property type="project" value="TreeGrafter"/>
</dbReference>
<dbReference type="GO" id="GO:0006094">
    <property type="term" value="P:gluconeogenesis"/>
    <property type="evidence" value="ECO:0007669"/>
    <property type="project" value="UniProtKB-UniRule"/>
</dbReference>
<dbReference type="GO" id="GO:0005986">
    <property type="term" value="P:sucrose biosynthetic process"/>
    <property type="evidence" value="ECO:0007669"/>
    <property type="project" value="TreeGrafter"/>
</dbReference>
<dbReference type="CDD" id="cd00354">
    <property type="entry name" value="FBPase"/>
    <property type="match status" value="1"/>
</dbReference>
<dbReference type="FunFam" id="3.30.540.10:FF:000002">
    <property type="entry name" value="Fructose-1,6-bisphosphatase class 1"/>
    <property type="match status" value="1"/>
</dbReference>
<dbReference type="FunFam" id="3.40.190.80:FF:000001">
    <property type="entry name" value="Fructose-1,6-bisphosphatase class 1"/>
    <property type="match status" value="1"/>
</dbReference>
<dbReference type="Gene3D" id="3.40.190.80">
    <property type="match status" value="1"/>
</dbReference>
<dbReference type="Gene3D" id="3.30.540.10">
    <property type="entry name" value="Fructose-1,6-Bisphosphatase, subunit A, domain 1"/>
    <property type="match status" value="1"/>
</dbReference>
<dbReference type="HAMAP" id="MF_01855">
    <property type="entry name" value="FBPase_class1"/>
    <property type="match status" value="1"/>
</dbReference>
<dbReference type="InterPro" id="IPR044015">
    <property type="entry name" value="FBPase_C_dom"/>
</dbReference>
<dbReference type="InterPro" id="IPR000146">
    <property type="entry name" value="FBPase_class-1"/>
</dbReference>
<dbReference type="InterPro" id="IPR033391">
    <property type="entry name" value="FBPase_N"/>
</dbReference>
<dbReference type="InterPro" id="IPR028343">
    <property type="entry name" value="FBPtase"/>
</dbReference>
<dbReference type="InterPro" id="IPR020548">
    <property type="entry name" value="Fructose_bisphosphatase_AS"/>
</dbReference>
<dbReference type="NCBIfam" id="NF006778">
    <property type="entry name" value="PRK09293.1-1"/>
    <property type="match status" value="1"/>
</dbReference>
<dbReference type="NCBIfam" id="NF006779">
    <property type="entry name" value="PRK09293.1-3"/>
    <property type="match status" value="1"/>
</dbReference>
<dbReference type="PANTHER" id="PTHR11556">
    <property type="entry name" value="FRUCTOSE-1,6-BISPHOSPHATASE-RELATED"/>
    <property type="match status" value="1"/>
</dbReference>
<dbReference type="PANTHER" id="PTHR11556:SF35">
    <property type="entry name" value="SEDOHEPTULOSE-1,7-BISPHOSPHATASE, CHLOROPLASTIC"/>
    <property type="match status" value="1"/>
</dbReference>
<dbReference type="Pfam" id="PF00316">
    <property type="entry name" value="FBPase"/>
    <property type="match status" value="1"/>
</dbReference>
<dbReference type="Pfam" id="PF18913">
    <property type="entry name" value="FBPase_C"/>
    <property type="match status" value="1"/>
</dbReference>
<dbReference type="PIRSF" id="PIRSF500210">
    <property type="entry name" value="FBPtase"/>
    <property type="match status" value="1"/>
</dbReference>
<dbReference type="PIRSF" id="PIRSF000904">
    <property type="entry name" value="FBPtase_SBPase"/>
    <property type="match status" value="1"/>
</dbReference>
<dbReference type="PRINTS" id="PR00115">
    <property type="entry name" value="F16BPHPHTASE"/>
</dbReference>
<dbReference type="SUPFAM" id="SSF56655">
    <property type="entry name" value="Carbohydrate phosphatase"/>
    <property type="match status" value="1"/>
</dbReference>
<dbReference type="PROSITE" id="PS00124">
    <property type="entry name" value="FBPASE"/>
    <property type="match status" value="1"/>
</dbReference>
<keyword id="KW-0119">Carbohydrate metabolism</keyword>
<keyword id="KW-0963">Cytoplasm</keyword>
<keyword id="KW-0378">Hydrolase</keyword>
<keyword id="KW-0460">Magnesium</keyword>
<keyword id="KW-0479">Metal-binding</keyword>
<proteinExistence type="inferred from homology"/>
<gene>
    <name evidence="1" type="primary">fbp</name>
    <name type="ordered locus">SeD_A4814</name>
</gene>
<sequence length="332" mass="36799">MKTLGEFIVEKQHEFSQATGELTALLSAIKLGAKIIHRDINKAGLVDILGASGAENVQGEVQQKLDLFANEKLKAALKARDIVAGIASEEEDEIVVFEGCEHAKYVVLMDPLDGSSNIDVNVSVGTIFSIYRRVTPVGTPVTEEDFLQPGNKQVAAGYVVYGSSTMLVYTTGCGVHAFTYDPSLGVFCLCQERMRFPEKGKTYSINEGNYIKFPNGVKKYIKFCQEEDSSTSRPYTSRYIGSLVADFHRNLLKGGIYLYPSTASHPQGKLRLLYECNPMAFLAEQAGGKASDGKERILDIIPESLHQRRSFFVGNRHMVDDVERFIREYPDA</sequence>
<reference key="1">
    <citation type="journal article" date="2011" name="J. Bacteriol.">
        <title>Comparative genomics of 28 Salmonella enterica isolates: evidence for CRISPR-mediated adaptive sublineage evolution.</title>
        <authorList>
            <person name="Fricke W.F."/>
            <person name="Mammel M.K."/>
            <person name="McDermott P.F."/>
            <person name="Tartera C."/>
            <person name="White D.G."/>
            <person name="Leclerc J.E."/>
            <person name="Ravel J."/>
            <person name="Cebula T.A."/>
        </authorList>
    </citation>
    <scope>NUCLEOTIDE SEQUENCE [LARGE SCALE GENOMIC DNA]</scope>
    <source>
        <strain>CT_02021853</strain>
    </source>
</reference>
<comment type="catalytic activity">
    <reaction evidence="1">
        <text>beta-D-fructose 1,6-bisphosphate + H2O = beta-D-fructose 6-phosphate + phosphate</text>
        <dbReference type="Rhea" id="RHEA:11064"/>
        <dbReference type="ChEBI" id="CHEBI:15377"/>
        <dbReference type="ChEBI" id="CHEBI:32966"/>
        <dbReference type="ChEBI" id="CHEBI:43474"/>
        <dbReference type="ChEBI" id="CHEBI:57634"/>
        <dbReference type="EC" id="3.1.3.11"/>
    </reaction>
</comment>
<comment type="cofactor">
    <cofactor evidence="1">
        <name>Mg(2+)</name>
        <dbReference type="ChEBI" id="CHEBI:18420"/>
    </cofactor>
    <text evidence="1">Binds 2 magnesium ions per subunit.</text>
</comment>
<comment type="pathway">
    <text evidence="1">Carbohydrate biosynthesis; gluconeogenesis.</text>
</comment>
<comment type="subunit">
    <text evidence="1">Homotetramer.</text>
</comment>
<comment type="subcellular location">
    <subcellularLocation>
        <location evidence="1">Cytoplasm</location>
    </subcellularLocation>
</comment>
<comment type="similarity">
    <text evidence="1">Belongs to the FBPase class 1 family.</text>
</comment>
<name>F16PA_SALDC</name>
<evidence type="ECO:0000255" key="1">
    <source>
        <dbReference type="HAMAP-Rule" id="MF_01855"/>
    </source>
</evidence>